<keyword id="KW-0028">Amino-acid biosynthesis</keyword>
<keyword id="KW-0055">Arginine biosynthesis</keyword>
<keyword id="KW-0067">ATP-binding</keyword>
<keyword id="KW-0436">Ligase</keyword>
<keyword id="KW-0460">Magnesium</keyword>
<keyword id="KW-0464">Manganese</keyword>
<keyword id="KW-0479">Metal-binding</keyword>
<keyword id="KW-0547">Nucleotide-binding</keyword>
<keyword id="KW-0665">Pyrimidine biosynthesis</keyword>
<keyword id="KW-1185">Reference proteome</keyword>
<keyword id="KW-0677">Repeat</keyword>
<organism>
    <name type="scientific">Lactobacillus acidophilus (strain ATCC 700396 / NCK56 / N2 / NCFM)</name>
    <dbReference type="NCBI Taxonomy" id="272621"/>
    <lineage>
        <taxon>Bacteria</taxon>
        <taxon>Bacillati</taxon>
        <taxon>Bacillota</taxon>
        <taxon>Bacilli</taxon>
        <taxon>Lactobacillales</taxon>
        <taxon>Lactobacillaceae</taxon>
        <taxon>Lactobacillus</taxon>
    </lineage>
</organism>
<name>CARB_LACAC</name>
<reference key="1">
    <citation type="journal article" date="2005" name="Proc. Natl. Acad. Sci. U.S.A.">
        <title>Complete genome sequence of the probiotic lactic acid bacterium Lactobacillus acidophilus NCFM.</title>
        <authorList>
            <person name="Altermann E."/>
            <person name="Russell W.M."/>
            <person name="Azcarate-Peril M.A."/>
            <person name="Barrangou R."/>
            <person name="Buck B.L."/>
            <person name="McAuliffe O."/>
            <person name="Souther N."/>
            <person name="Dobson A."/>
            <person name="Duong T."/>
            <person name="Callanan M."/>
            <person name="Lick S."/>
            <person name="Hamrick A."/>
            <person name="Cano R."/>
            <person name="Klaenhammer T.R."/>
        </authorList>
    </citation>
    <scope>NUCLEOTIDE SEQUENCE [LARGE SCALE GENOMIC DNA]</scope>
    <source>
        <strain>ATCC 700396 / NCK56 / N2 / NCFM</strain>
    </source>
</reference>
<dbReference type="EC" id="6.3.4.16" evidence="1"/>
<dbReference type="EC" id="6.3.5.5" evidence="1"/>
<dbReference type="EMBL" id="CP000033">
    <property type="protein sequence ID" value="AAV43204.1"/>
    <property type="molecule type" value="Genomic_DNA"/>
</dbReference>
<dbReference type="RefSeq" id="WP_011254441.1">
    <property type="nucleotide sequence ID" value="NC_006814.3"/>
</dbReference>
<dbReference type="RefSeq" id="YP_194235.1">
    <property type="nucleotide sequence ID" value="NC_006814.3"/>
</dbReference>
<dbReference type="SMR" id="Q5FJC0"/>
<dbReference type="STRING" id="272621.LBA1379"/>
<dbReference type="GeneID" id="93289545"/>
<dbReference type="KEGG" id="lac:LBA1379"/>
<dbReference type="PATRIC" id="fig|272621.13.peg.1305"/>
<dbReference type="eggNOG" id="COG0458">
    <property type="taxonomic scope" value="Bacteria"/>
</dbReference>
<dbReference type="HOGENOM" id="CLU_000513_1_2_9"/>
<dbReference type="OrthoDB" id="9804197at2"/>
<dbReference type="BioCyc" id="LACI272621:G1G49-1353-MONOMER"/>
<dbReference type="UniPathway" id="UPA00068">
    <property type="reaction ID" value="UER00171"/>
</dbReference>
<dbReference type="UniPathway" id="UPA00070">
    <property type="reaction ID" value="UER00115"/>
</dbReference>
<dbReference type="Proteomes" id="UP000006381">
    <property type="component" value="Chromosome"/>
</dbReference>
<dbReference type="GO" id="GO:0005737">
    <property type="term" value="C:cytoplasm"/>
    <property type="evidence" value="ECO:0007669"/>
    <property type="project" value="TreeGrafter"/>
</dbReference>
<dbReference type="GO" id="GO:0005524">
    <property type="term" value="F:ATP binding"/>
    <property type="evidence" value="ECO:0007669"/>
    <property type="project" value="UniProtKB-UniRule"/>
</dbReference>
<dbReference type="GO" id="GO:0004087">
    <property type="term" value="F:carbamoyl-phosphate synthase (ammonia) activity"/>
    <property type="evidence" value="ECO:0007669"/>
    <property type="project" value="RHEA"/>
</dbReference>
<dbReference type="GO" id="GO:0004088">
    <property type="term" value="F:carbamoyl-phosphate synthase (glutamine-hydrolyzing) activity"/>
    <property type="evidence" value="ECO:0007669"/>
    <property type="project" value="UniProtKB-UniRule"/>
</dbReference>
<dbReference type="GO" id="GO:0046872">
    <property type="term" value="F:metal ion binding"/>
    <property type="evidence" value="ECO:0007669"/>
    <property type="project" value="UniProtKB-KW"/>
</dbReference>
<dbReference type="GO" id="GO:0044205">
    <property type="term" value="P:'de novo' UMP biosynthetic process"/>
    <property type="evidence" value="ECO:0007669"/>
    <property type="project" value="UniProtKB-UniRule"/>
</dbReference>
<dbReference type="GO" id="GO:0006541">
    <property type="term" value="P:glutamine metabolic process"/>
    <property type="evidence" value="ECO:0007669"/>
    <property type="project" value="TreeGrafter"/>
</dbReference>
<dbReference type="GO" id="GO:0006526">
    <property type="term" value="P:L-arginine biosynthetic process"/>
    <property type="evidence" value="ECO:0007669"/>
    <property type="project" value="UniProtKB-UniRule"/>
</dbReference>
<dbReference type="CDD" id="cd01424">
    <property type="entry name" value="MGS_CPS_II"/>
    <property type="match status" value="1"/>
</dbReference>
<dbReference type="FunFam" id="1.10.1030.10:FF:000002">
    <property type="entry name" value="Carbamoyl-phosphate synthase large chain"/>
    <property type="match status" value="1"/>
</dbReference>
<dbReference type="FunFam" id="3.30.1490.20:FF:000001">
    <property type="entry name" value="Carbamoyl-phosphate synthase large chain"/>
    <property type="match status" value="1"/>
</dbReference>
<dbReference type="FunFam" id="3.30.470.20:FF:000001">
    <property type="entry name" value="Carbamoyl-phosphate synthase large chain"/>
    <property type="match status" value="1"/>
</dbReference>
<dbReference type="FunFam" id="3.30.470.20:FF:000026">
    <property type="entry name" value="Carbamoyl-phosphate synthase large chain"/>
    <property type="match status" value="1"/>
</dbReference>
<dbReference type="FunFam" id="3.40.50.20:FF:000001">
    <property type="entry name" value="Carbamoyl-phosphate synthase large chain"/>
    <property type="match status" value="1"/>
</dbReference>
<dbReference type="FunFam" id="3.40.50.20:FF:000002">
    <property type="entry name" value="Carbamoyl-phosphate synthase large chain"/>
    <property type="match status" value="1"/>
</dbReference>
<dbReference type="Gene3D" id="3.40.50.20">
    <property type="match status" value="2"/>
</dbReference>
<dbReference type="Gene3D" id="3.30.1490.20">
    <property type="entry name" value="ATP-grasp fold, A domain"/>
    <property type="match status" value="1"/>
</dbReference>
<dbReference type="Gene3D" id="3.30.470.20">
    <property type="entry name" value="ATP-grasp fold, B domain"/>
    <property type="match status" value="2"/>
</dbReference>
<dbReference type="Gene3D" id="1.10.1030.10">
    <property type="entry name" value="Carbamoyl-phosphate synthetase, large subunit oligomerisation domain"/>
    <property type="match status" value="1"/>
</dbReference>
<dbReference type="Gene3D" id="3.40.50.1380">
    <property type="entry name" value="Methylglyoxal synthase-like domain"/>
    <property type="match status" value="1"/>
</dbReference>
<dbReference type="HAMAP" id="MF_01210_A">
    <property type="entry name" value="CPSase_L_chain_A"/>
    <property type="match status" value="1"/>
</dbReference>
<dbReference type="HAMAP" id="MF_01210_B">
    <property type="entry name" value="CPSase_L_chain_B"/>
    <property type="match status" value="1"/>
</dbReference>
<dbReference type="InterPro" id="IPR011761">
    <property type="entry name" value="ATP-grasp"/>
</dbReference>
<dbReference type="InterPro" id="IPR013815">
    <property type="entry name" value="ATP_grasp_subdomain_1"/>
</dbReference>
<dbReference type="InterPro" id="IPR006275">
    <property type="entry name" value="CarbamoylP_synth_lsu"/>
</dbReference>
<dbReference type="InterPro" id="IPR005480">
    <property type="entry name" value="CarbamoylP_synth_lsu_oligo"/>
</dbReference>
<dbReference type="InterPro" id="IPR036897">
    <property type="entry name" value="CarbamoylP_synth_lsu_oligo_sf"/>
</dbReference>
<dbReference type="InterPro" id="IPR005479">
    <property type="entry name" value="CbamoylP_synth_lsu-like_ATP-bd"/>
</dbReference>
<dbReference type="InterPro" id="IPR005483">
    <property type="entry name" value="CbamoylP_synth_lsu_CPSase_dom"/>
</dbReference>
<dbReference type="InterPro" id="IPR011607">
    <property type="entry name" value="MGS-like_dom"/>
</dbReference>
<dbReference type="InterPro" id="IPR036914">
    <property type="entry name" value="MGS-like_dom_sf"/>
</dbReference>
<dbReference type="InterPro" id="IPR033937">
    <property type="entry name" value="MGS_CPS_CarB"/>
</dbReference>
<dbReference type="InterPro" id="IPR016185">
    <property type="entry name" value="PreATP-grasp_dom_sf"/>
</dbReference>
<dbReference type="NCBIfam" id="TIGR01369">
    <property type="entry name" value="CPSaseII_lrg"/>
    <property type="match status" value="1"/>
</dbReference>
<dbReference type="NCBIfam" id="NF003671">
    <property type="entry name" value="PRK05294.1"/>
    <property type="match status" value="1"/>
</dbReference>
<dbReference type="NCBIfam" id="NF009455">
    <property type="entry name" value="PRK12815.1"/>
    <property type="match status" value="1"/>
</dbReference>
<dbReference type="PANTHER" id="PTHR11405:SF53">
    <property type="entry name" value="CARBAMOYL-PHOSPHATE SYNTHASE [AMMONIA], MITOCHONDRIAL"/>
    <property type="match status" value="1"/>
</dbReference>
<dbReference type="PANTHER" id="PTHR11405">
    <property type="entry name" value="CARBAMOYLTRANSFERASE FAMILY MEMBER"/>
    <property type="match status" value="1"/>
</dbReference>
<dbReference type="Pfam" id="PF02786">
    <property type="entry name" value="CPSase_L_D2"/>
    <property type="match status" value="2"/>
</dbReference>
<dbReference type="Pfam" id="PF02787">
    <property type="entry name" value="CPSase_L_D3"/>
    <property type="match status" value="1"/>
</dbReference>
<dbReference type="Pfam" id="PF02142">
    <property type="entry name" value="MGS"/>
    <property type="match status" value="1"/>
</dbReference>
<dbReference type="PRINTS" id="PR00098">
    <property type="entry name" value="CPSASE"/>
</dbReference>
<dbReference type="SMART" id="SM01096">
    <property type="entry name" value="CPSase_L_D3"/>
    <property type="match status" value="1"/>
</dbReference>
<dbReference type="SMART" id="SM01209">
    <property type="entry name" value="GARS_A"/>
    <property type="match status" value="1"/>
</dbReference>
<dbReference type="SMART" id="SM00851">
    <property type="entry name" value="MGS"/>
    <property type="match status" value="1"/>
</dbReference>
<dbReference type="SUPFAM" id="SSF48108">
    <property type="entry name" value="Carbamoyl phosphate synthetase, large subunit connection domain"/>
    <property type="match status" value="1"/>
</dbReference>
<dbReference type="SUPFAM" id="SSF56059">
    <property type="entry name" value="Glutathione synthetase ATP-binding domain-like"/>
    <property type="match status" value="2"/>
</dbReference>
<dbReference type="SUPFAM" id="SSF52335">
    <property type="entry name" value="Methylglyoxal synthase-like"/>
    <property type="match status" value="1"/>
</dbReference>
<dbReference type="SUPFAM" id="SSF52440">
    <property type="entry name" value="PreATP-grasp domain"/>
    <property type="match status" value="2"/>
</dbReference>
<dbReference type="PROSITE" id="PS50975">
    <property type="entry name" value="ATP_GRASP"/>
    <property type="match status" value="2"/>
</dbReference>
<dbReference type="PROSITE" id="PS00866">
    <property type="entry name" value="CPSASE_1"/>
    <property type="match status" value="2"/>
</dbReference>
<dbReference type="PROSITE" id="PS00867">
    <property type="entry name" value="CPSASE_2"/>
    <property type="match status" value="2"/>
</dbReference>
<dbReference type="PROSITE" id="PS51855">
    <property type="entry name" value="MGS"/>
    <property type="match status" value="1"/>
</dbReference>
<proteinExistence type="inferred from homology"/>
<protein>
    <recommendedName>
        <fullName evidence="1">Carbamoyl phosphate synthase large chain</fullName>
        <ecNumber evidence="1">6.3.4.16</ecNumber>
        <ecNumber evidence="1">6.3.5.5</ecNumber>
    </recommendedName>
    <alternativeName>
        <fullName evidence="1">Carbamoyl phosphate synthetase ammonia chain</fullName>
    </alternativeName>
</protein>
<sequence>MPKRKDIHKIMVIGSGPIIIGQAAEFDYSGTQACLALREEGYQVVLVNSNPATIMTDTTIADKVYIEPLTVDSISRIIRQEYPDAILPTLGGQVGLNMALALAKTGILDELNIELLGTKLKSIEQAEDREQFKNLCKELGEPVPPSKTVNTVEAAVEFGDEIGYPIIVRPAFTMGGTGGGICHNRKELAEIAKNGLELSPVTECLIEKSIAGYKEIEFEVMRDHDDNAMIVCCMENFDPVGIHTGDSIVFSPSQTLSDKEYQMLRDCSLKLIRALKIEGGCNVQLALDPNSFDYDVIEVNPRVSRSSALASKATGYPIAKMAAKIAVGMTLDEIKNPVTGTTYAEFEPALDYVVCKIPRWPFDKFQKADRTLGTQMKATGEVMAIGRTAEEAMQKAVRSLEIDEKDLYSEEAHRASDDKLEQKLVKAQDDRLFYLAEAFRRGYSLEDVHELTKINFYFLDIVKHMIEMEKELKENKDEVDILRLAKKYGFSDPTIANLWGETADEVRDFRKAHGIIPVYKMVDTCAAEFESQTPYFYSTYDAENESHRSGKKSVIVIGSGPIRIGQGVEFDYATVHCVKALQKMGYEAIVINSNPETVSTDFSVSDKLYFEPLTLEDVLNVCDLEEPEGVIVQFGGQTSINLAAGLEAHGVKILGTTVKDVNRAEDRKLFDDIIKELKLNQPQGLTATTHEGVIEAAEKLGYPVLVRPSYVLGGKAMEIVYNKKELEEYLQDHVDIAADHPILVDDYLDGRECDVDAISDGYDVLLPGIMEHIEHAGVHSGDSMAVYPPQTFTDEIKEKITEVTKKLALTLNCVGIMNIQFIVRDGEVYVIEVNPRASRTVPFLSKITGIEMAQVATRVIMGESLKEQGYGDGLASEPDMISVKAPVFSFSKLADVDSYLGPEMKSTGEVMGSDHTFAKALYKAFAGAKMQLPENGNVLLTIEDRDKDKILPIAKRFARIGYRIFATKGTADFLKKNDLHVDLVTKVHEDEQADDNILNELRNNKIDLVINTMGHDIEKNSDGFIIRQMAIQQNVPLLTALDTADALLTALENRSFATDALQ</sequence>
<evidence type="ECO:0000255" key="1">
    <source>
        <dbReference type="HAMAP-Rule" id="MF_01210"/>
    </source>
</evidence>
<gene>
    <name evidence="1" type="primary">carB</name>
    <name type="ordered locus">LBA1379</name>
</gene>
<accession>Q5FJC0</accession>
<feature type="chain" id="PRO_1000066352" description="Carbamoyl phosphate synthase large chain">
    <location>
        <begin position="1"/>
        <end position="1062"/>
    </location>
</feature>
<feature type="domain" description="ATP-grasp 1" evidence="1">
    <location>
        <begin position="133"/>
        <end position="327"/>
    </location>
</feature>
<feature type="domain" description="ATP-grasp 2" evidence="1">
    <location>
        <begin position="671"/>
        <end position="861"/>
    </location>
</feature>
<feature type="domain" description="MGS-like" evidence="1">
    <location>
        <begin position="930"/>
        <end position="1062"/>
    </location>
</feature>
<feature type="region of interest" description="Carboxyphosphate synthetic domain" evidence="1">
    <location>
        <begin position="1"/>
        <end position="401"/>
    </location>
</feature>
<feature type="region of interest" description="Oligomerization domain" evidence="1">
    <location>
        <begin position="402"/>
        <end position="546"/>
    </location>
</feature>
<feature type="region of interest" description="Carbamoyl phosphate synthetic domain" evidence="1">
    <location>
        <begin position="547"/>
        <end position="929"/>
    </location>
</feature>
<feature type="region of interest" description="Allosteric domain" evidence="1">
    <location>
        <begin position="930"/>
        <end position="1062"/>
    </location>
</feature>
<feature type="binding site" evidence="1">
    <location>
        <position position="129"/>
    </location>
    <ligand>
        <name>ATP</name>
        <dbReference type="ChEBI" id="CHEBI:30616"/>
        <label>1</label>
    </ligand>
</feature>
<feature type="binding site" evidence="1">
    <location>
        <position position="169"/>
    </location>
    <ligand>
        <name>ATP</name>
        <dbReference type="ChEBI" id="CHEBI:30616"/>
        <label>1</label>
    </ligand>
</feature>
<feature type="binding site" evidence="1">
    <location>
        <position position="175"/>
    </location>
    <ligand>
        <name>ATP</name>
        <dbReference type="ChEBI" id="CHEBI:30616"/>
        <label>1</label>
    </ligand>
</feature>
<feature type="binding site" evidence="1">
    <location>
        <position position="176"/>
    </location>
    <ligand>
        <name>ATP</name>
        <dbReference type="ChEBI" id="CHEBI:30616"/>
        <label>1</label>
    </ligand>
</feature>
<feature type="binding site" evidence="1">
    <location>
        <position position="208"/>
    </location>
    <ligand>
        <name>ATP</name>
        <dbReference type="ChEBI" id="CHEBI:30616"/>
        <label>1</label>
    </ligand>
</feature>
<feature type="binding site" evidence="1">
    <location>
        <position position="210"/>
    </location>
    <ligand>
        <name>ATP</name>
        <dbReference type="ChEBI" id="CHEBI:30616"/>
        <label>1</label>
    </ligand>
</feature>
<feature type="binding site" evidence="1">
    <location>
        <position position="215"/>
    </location>
    <ligand>
        <name>ATP</name>
        <dbReference type="ChEBI" id="CHEBI:30616"/>
        <label>1</label>
    </ligand>
</feature>
<feature type="binding site" evidence="1">
    <location>
        <position position="241"/>
    </location>
    <ligand>
        <name>ATP</name>
        <dbReference type="ChEBI" id="CHEBI:30616"/>
        <label>1</label>
    </ligand>
</feature>
<feature type="binding site" evidence="1">
    <location>
        <position position="242"/>
    </location>
    <ligand>
        <name>ATP</name>
        <dbReference type="ChEBI" id="CHEBI:30616"/>
        <label>1</label>
    </ligand>
</feature>
<feature type="binding site" evidence="1">
    <location>
        <position position="243"/>
    </location>
    <ligand>
        <name>ATP</name>
        <dbReference type="ChEBI" id="CHEBI:30616"/>
        <label>1</label>
    </ligand>
</feature>
<feature type="binding site" evidence="1">
    <location>
        <position position="284"/>
    </location>
    <ligand>
        <name>ATP</name>
        <dbReference type="ChEBI" id="CHEBI:30616"/>
        <label>1</label>
    </ligand>
</feature>
<feature type="binding site" evidence="1">
    <location>
        <position position="284"/>
    </location>
    <ligand>
        <name>Mg(2+)</name>
        <dbReference type="ChEBI" id="CHEBI:18420"/>
        <label>1</label>
    </ligand>
</feature>
<feature type="binding site" evidence="1">
    <location>
        <position position="284"/>
    </location>
    <ligand>
        <name>Mn(2+)</name>
        <dbReference type="ChEBI" id="CHEBI:29035"/>
        <label>1</label>
    </ligand>
</feature>
<feature type="binding site" evidence="1">
    <location>
        <position position="298"/>
    </location>
    <ligand>
        <name>ATP</name>
        <dbReference type="ChEBI" id="CHEBI:30616"/>
        <label>1</label>
    </ligand>
</feature>
<feature type="binding site" evidence="1">
    <location>
        <position position="298"/>
    </location>
    <ligand>
        <name>Mg(2+)</name>
        <dbReference type="ChEBI" id="CHEBI:18420"/>
        <label>1</label>
    </ligand>
</feature>
<feature type="binding site" evidence="1">
    <location>
        <position position="298"/>
    </location>
    <ligand>
        <name>Mg(2+)</name>
        <dbReference type="ChEBI" id="CHEBI:18420"/>
        <label>2</label>
    </ligand>
</feature>
<feature type="binding site" evidence="1">
    <location>
        <position position="298"/>
    </location>
    <ligand>
        <name>Mn(2+)</name>
        <dbReference type="ChEBI" id="CHEBI:29035"/>
        <label>1</label>
    </ligand>
</feature>
<feature type="binding site" evidence="1">
    <location>
        <position position="298"/>
    </location>
    <ligand>
        <name>Mn(2+)</name>
        <dbReference type="ChEBI" id="CHEBI:29035"/>
        <label>2</label>
    </ligand>
</feature>
<feature type="binding site" evidence="1">
    <location>
        <position position="300"/>
    </location>
    <ligand>
        <name>Mg(2+)</name>
        <dbReference type="ChEBI" id="CHEBI:18420"/>
        <label>2</label>
    </ligand>
</feature>
<feature type="binding site" evidence="1">
    <location>
        <position position="300"/>
    </location>
    <ligand>
        <name>Mn(2+)</name>
        <dbReference type="ChEBI" id="CHEBI:29035"/>
        <label>2</label>
    </ligand>
</feature>
<feature type="binding site" evidence="1">
    <location>
        <position position="707"/>
    </location>
    <ligand>
        <name>ATP</name>
        <dbReference type="ChEBI" id="CHEBI:30616"/>
        <label>2</label>
    </ligand>
</feature>
<feature type="binding site" evidence="1">
    <location>
        <position position="746"/>
    </location>
    <ligand>
        <name>ATP</name>
        <dbReference type="ChEBI" id="CHEBI:30616"/>
        <label>2</label>
    </ligand>
</feature>
<feature type="binding site" evidence="1">
    <location>
        <position position="748"/>
    </location>
    <ligand>
        <name>ATP</name>
        <dbReference type="ChEBI" id="CHEBI:30616"/>
        <label>2</label>
    </ligand>
</feature>
<feature type="binding site" evidence="1">
    <location>
        <position position="752"/>
    </location>
    <ligand>
        <name>ATP</name>
        <dbReference type="ChEBI" id="CHEBI:30616"/>
        <label>2</label>
    </ligand>
</feature>
<feature type="binding site" evidence="1">
    <location>
        <position position="777"/>
    </location>
    <ligand>
        <name>ATP</name>
        <dbReference type="ChEBI" id="CHEBI:30616"/>
        <label>2</label>
    </ligand>
</feature>
<feature type="binding site" evidence="1">
    <location>
        <position position="778"/>
    </location>
    <ligand>
        <name>ATP</name>
        <dbReference type="ChEBI" id="CHEBI:30616"/>
        <label>2</label>
    </ligand>
</feature>
<feature type="binding site" evidence="1">
    <location>
        <position position="779"/>
    </location>
    <ligand>
        <name>ATP</name>
        <dbReference type="ChEBI" id="CHEBI:30616"/>
        <label>2</label>
    </ligand>
</feature>
<feature type="binding site" evidence="1">
    <location>
        <position position="780"/>
    </location>
    <ligand>
        <name>ATP</name>
        <dbReference type="ChEBI" id="CHEBI:30616"/>
        <label>2</label>
    </ligand>
</feature>
<feature type="binding site" evidence="1">
    <location>
        <position position="820"/>
    </location>
    <ligand>
        <name>ATP</name>
        <dbReference type="ChEBI" id="CHEBI:30616"/>
        <label>2</label>
    </ligand>
</feature>
<feature type="binding site" evidence="1">
    <location>
        <position position="820"/>
    </location>
    <ligand>
        <name>Mg(2+)</name>
        <dbReference type="ChEBI" id="CHEBI:18420"/>
        <label>3</label>
    </ligand>
</feature>
<feature type="binding site" evidence="1">
    <location>
        <position position="820"/>
    </location>
    <ligand>
        <name>Mn(2+)</name>
        <dbReference type="ChEBI" id="CHEBI:29035"/>
        <label>3</label>
    </ligand>
</feature>
<feature type="binding site" evidence="1">
    <location>
        <position position="832"/>
    </location>
    <ligand>
        <name>ATP</name>
        <dbReference type="ChEBI" id="CHEBI:30616"/>
        <label>2</label>
    </ligand>
</feature>
<feature type="binding site" evidence="1">
    <location>
        <position position="832"/>
    </location>
    <ligand>
        <name>Mg(2+)</name>
        <dbReference type="ChEBI" id="CHEBI:18420"/>
        <label>3</label>
    </ligand>
</feature>
<feature type="binding site" evidence="1">
    <location>
        <position position="832"/>
    </location>
    <ligand>
        <name>Mg(2+)</name>
        <dbReference type="ChEBI" id="CHEBI:18420"/>
        <label>4</label>
    </ligand>
</feature>
<feature type="binding site" evidence="1">
    <location>
        <position position="832"/>
    </location>
    <ligand>
        <name>Mn(2+)</name>
        <dbReference type="ChEBI" id="CHEBI:29035"/>
        <label>3</label>
    </ligand>
</feature>
<feature type="binding site" evidence="1">
    <location>
        <position position="832"/>
    </location>
    <ligand>
        <name>Mn(2+)</name>
        <dbReference type="ChEBI" id="CHEBI:29035"/>
        <label>4</label>
    </ligand>
</feature>
<feature type="binding site" evidence="1">
    <location>
        <position position="834"/>
    </location>
    <ligand>
        <name>Mg(2+)</name>
        <dbReference type="ChEBI" id="CHEBI:18420"/>
        <label>4</label>
    </ligand>
</feature>
<feature type="binding site" evidence="1">
    <location>
        <position position="834"/>
    </location>
    <ligand>
        <name>Mn(2+)</name>
        <dbReference type="ChEBI" id="CHEBI:29035"/>
        <label>4</label>
    </ligand>
</feature>
<comment type="function">
    <text evidence="1">Large subunit of the glutamine-dependent carbamoyl phosphate synthetase (CPSase). CPSase catalyzes the formation of carbamoyl phosphate from the ammonia moiety of glutamine, carbonate, and phosphate donated by ATP, constituting the first step of 2 biosynthetic pathways, one leading to arginine and/or urea and the other to pyrimidine nucleotides. The large subunit (synthetase) binds the substrates ammonia (free or transferred from glutamine from the small subunit), hydrogencarbonate and ATP and carries out an ATP-coupled ligase reaction, activating hydrogencarbonate by forming carboxy phosphate which reacts with ammonia to form carbamoyl phosphate.</text>
</comment>
<comment type="catalytic activity">
    <reaction evidence="1">
        <text>hydrogencarbonate + L-glutamine + 2 ATP + H2O = carbamoyl phosphate + L-glutamate + 2 ADP + phosphate + 2 H(+)</text>
        <dbReference type="Rhea" id="RHEA:18633"/>
        <dbReference type="ChEBI" id="CHEBI:15377"/>
        <dbReference type="ChEBI" id="CHEBI:15378"/>
        <dbReference type="ChEBI" id="CHEBI:17544"/>
        <dbReference type="ChEBI" id="CHEBI:29985"/>
        <dbReference type="ChEBI" id="CHEBI:30616"/>
        <dbReference type="ChEBI" id="CHEBI:43474"/>
        <dbReference type="ChEBI" id="CHEBI:58228"/>
        <dbReference type="ChEBI" id="CHEBI:58359"/>
        <dbReference type="ChEBI" id="CHEBI:456216"/>
        <dbReference type="EC" id="6.3.5.5"/>
    </reaction>
</comment>
<comment type="catalytic activity">
    <molecule>Carbamoyl phosphate synthase large chain</molecule>
    <reaction evidence="1">
        <text>hydrogencarbonate + NH4(+) + 2 ATP = carbamoyl phosphate + 2 ADP + phosphate + 2 H(+)</text>
        <dbReference type="Rhea" id="RHEA:18029"/>
        <dbReference type="ChEBI" id="CHEBI:15378"/>
        <dbReference type="ChEBI" id="CHEBI:17544"/>
        <dbReference type="ChEBI" id="CHEBI:28938"/>
        <dbReference type="ChEBI" id="CHEBI:30616"/>
        <dbReference type="ChEBI" id="CHEBI:43474"/>
        <dbReference type="ChEBI" id="CHEBI:58228"/>
        <dbReference type="ChEBI" id="CHEBI:456216"/>
        <dbReference type="EC" id="6.3.4.16"/>
    </reaction>
</comment>
<comment type="cofactor">
    <cofactor evidence="1">
        <name>Mg(2+)</name>
        <dbReference type="ChEBI" id="CHEBI:18420"/>
    </cofactor>
    <cofactor evidence="1">
        <name>Mn(2+)</name>
        <dbReference type="ChEBI" id="CHEBI:29035"/>
    </cofactor>
    <text evidence="1">Binds 4 Mg(2+) or Mn(2+) ions per subunit.</text>
</comment>
<comment type="pathway">
    <text evidence="1">Amino-acid biosynthesis; L-arginine biosynthesis; carbamoyl phosphate from bicarbonate: step 1/1.</text>
</comment>
<comment type="pathway">
    <text evidence="1">Pyrimidine metabolism; UMP biosynthesis via de novo pathway; (S)-dihydroorotate from bicarbonate: step 1/3.</text>
</comment>
<comment type="subunit">
    <text evidence="1">Composed of two chains; the small (or glutamine) chain promotes the hydrolysis of glutamine to ammonia, which is used by the large (or ammonia) chain to synthesize carbamoyl phosphate. Tetramer of heterodimers (alpha,beta)4.</text>
</comment>
<comment type="domain">
    <text evidence="1">The large subunit is composed of 2 ATP-grasp domains that are involved in binding the 2 ATP molecules needed for carbamoyl phosphate synthesis. The N-terminal ATP-grasp domain (referred to as the carboxyphosphate synthetic component) catalyzes the ATP-dependent phosphorylation of hydrogencarbonate to carboxyphosphate and the subsequent nucleophilic attack by ammonia to form a carbamate intermediate. The C-terminal ATP-grasp domain (referred to as the carbamoyl phosphate synthetic component) then catalyzes the phosphorylation of carbamate with the second ATP to form the end product carbamoyl phosphate. The reactive and unstable enzyme intermediates are sequentially channeled from one active site to the next through the interior of the protein over a distance of at least 96 A.</text>
</comment>
<comment type="similarity">
    <text evidence="1">Belongs to the CarB family.</text>
</comment>